<dbReference type="EC" id="2.7.10.2"/>
<dbReference type="EMBL" id="L33920">
    <property type="protein sequence ID" value="AAA99456.1"/>
    <property type="molecule type" value="mRNA"/>
</dbReference>
<dbReference type="EMBL" id="U11078">
    <property type="protein sequence ID" value="AAA80333.1"/>
    <property type="molecule type" value="mRNA"/>
</dbReference>
<dbReference type="PIR" id="I51670">
    <property type="entry name" value="I51670"/>
</dbReference>
<dbReference type="PIR" id="JC4200">
    <property type="entry name" value="JC4200"/>
</dbReference>
<dbReference type="RefSeq" id="NP_001084066.1">
    <molecule id="Q91738-1"/>
    <property type="nucleotide sequence ID" value="NM_001090597.1"/>
</dbReference>
<dbReference type="SMR" id="Q91738"/>
<dbReference type="GeneID" id="399286"/>
<dbReference type="KEGG" id="xla:399286"/>
<dbReference type="AGR" id="Xenbase:XB-GENE-952029"/>
<dbReference type="CTD" id="399286"/>
<dbReference type="Xenbase" id="XB-GENE-952029">
    <property type="gene designation" value="ptk2.L"/>
</dbReference>
<dbReference type="OrthoDB" id="9976756at2759"/>
<dbReference type="BRENDA" id="2.7.10.2">
    <property type="organism ID" value="6725"/>
</dbReference>
<dbReference type="Proteomes" id="UP000186698">
    <property type="component" value="Chromosome 6L"/>
</dbReference>
<dbReference type="Bgee" id="399286">
    <property type="expression patterns" value="Expressed in egg cell and 19 other cell types or tissues"/>
</dbReference>
<dbReference type="GO" id="GO:0036064">
    <property type="term" value="C:ciliary basal body"/>
    <property type="evidence" value="ECO:0000250"/>
    <property type="project" value="UniProtKB"/>
</dbReference>
<dbReference type="GO" id="GO:0005737">
    <property type="term" value="C:cytoplasm"/>
    <property type="evidence" value="ECO:0007669"/>
    <property type="project" value="UniProtKB-KW"/>
</dbReference>
<dbReference type="GO" id="GO:0005925">
    <property type="term" value="C:focal adhesion"/>
    <property type="evidence" value="ECO:0007669"/>
    <property type="project" value="UniProtKB-SubCell"/>
</dbReference>
<dbReference type="GO" id="GO:0005886">
    <property type="term" value="C:plasma membrane"/>
    <property type="evidence" value="ECO:0007669"/>
    <property type="project" value="UniProtKB-SubCell"/>
</dbReference>
<dbReference type="GO" id="GO:0005524">
    <property type="term" value="F:ATP binding"/>
    <property type="evidence" value="ECO:0007669"/>
    <property type="project" value="UniProtKB-KW"/>
</dbReference>
<dbReference type="GO" id="GO:0004715">
    <property type="term" value="F:non-membrane spanning protein tyrosine kinase activity"/>
    <property type="evidence" value="ECO:0007669"/>
    <property type="project" value="UniProtKB-EC"/>
</dbReference>
<dbReference type="GO" id="GO:0008284">
    <property type="term" value="P:positive regulation of cell population proliferation"/>
    <property type="evidence" value="ECO:0007669"/>
    <property type="project" value="UniProtKB-ARBA"/>
</dbReference>
<dbReference type="GO" id="GO:0051128">
    <property type="term" value="P:regulation of cellular component organization"/>
    <property type="evidence" value="ECO:0007669"/>
    <property type="project" value="UniProtKB-ARBA"/>
</dbReference>
<dbReference type="GO" id="GO:0007172">
    <property type="term" value="P:signal complex assembly"/>
    <property type="evidence" value="ECO:0007669"/>
    <property type="project" value="InterPro"/>
</dbReference>
<dbReference type="CDD" id="cd14473">
    <property type="entry name" value="FERM_B-lobe"/>
    <property type="match status" value="1"/>
</dbReference>
<dbReference type="CDD" id="cd13190">
    <property type="entry name" value="FERM_C_FAK1"/>
    <property type="match status" value="1"/>
</dbReference>
<dbReference type="CDD" id="cd05056">
    <property type="entry name" value="PTKc_FAK"/>
    <property type="match status" value="1"/>
</dbReference>
<dbReference type="FunFam" id="1.20.120.330:FF:000001">
    <property type="entry name" value="focal adhesion kinase 1 isoform X1"/>
    <property type="match status" value="1"/>
</dbReference>
<dbReference type="FunFam" id="2.30.29.30:FF:000058">
    <property type="entry name" value="focal adhesion kinase 1 isoform X1"/>
    <property type="match status" value="1"/>
</dbReference>
<dbReference type="FunFam" id="3.10.20.90:FF:000021">
    <property type="entry name" value="focal adhesion kinase 1 isoform X1"/>
    <property type="match status" value="1"/>
</dbReference>
<dbReference type="FunFam" id="3.30.200.20:FF:000047">
    <property type="entry name" value="focal adhesion kinase 1 isoform X2"/>
    <property type="match status" value="1"/>
</dbReference>
<dbReference type="FunFam" id="1.10.510.10:FF:000039">
    <property type="entry name" value="Focal adhesion kinase, isoform D"/>
    <property type="match status" value="1"/>
</dbReference>
<dbReference type="FunFam" id="1.20.80.10:FF:000004">
    <property type="entry name" value="Protein-tyrosine kinase 2-beta isoform 1"/>
    <property type="match status" value="1"/>
</dbReference>
<dbReference type="Gene3D" id="1.20.80.10">
    <property type="match status" value="1"/>
</dbReference>
<dbReference type="Gene3D" id="1.20.120.330">
    <property type="entry name" value="Nucleotidyltransferases domain 2"/>
    <property type="match status" value="1"/>
</dbReference>
<dbReference type="Gene3D" id="3.10.20.90">
    <property type="entry name" value="Phosphatidylinositol 3-kinase Catalytic Subunit, Chain A, domain 1"/>
    <property type="match status" value="1"/>
</dbReference>
<dbReference type="Gene3D" id="3.30.200.20">
    <property type="entry name" value="Phosphorylase Kinase, domain 1"/>
    <property type="match status" value="1"/>
</dbReference>
<dbReference type="Gene3D" id="2.30.29.30">
    <property type="entry name" value="Pleckstrin-homology domain (PH domain)/Phosphotyrosine-binding domain (PTB)"/>
    <property type="match status" value="1"/>
</dbReference>
<dbReference type="Gene3D" id="1.20.5.540">
    <property type="entry name" value="Single helix bin"/>
    <property type="match status" value="1"/>
</dbReference>
<dbReference type="Gene3D" id="1.10.510.10">
    <property type="entry name" value="Transferase(Phosphotransferase) domain 1"/>
    <property type="match status" value="1"/>
</dbReference>
<dbReference type="InterPro" id="IPR019749">
    <property type="entry name" value="Band_41_domain"/>
</dbReference>
<dbReference type="InterPro" id="IPR041390">
    <property type="entry name" value="FADK_N"/>
</dbReference>
<dbReference type="InterPro" id="IPR049385">
    <property type="entry name" value="FAK1-like_FERM_C"/>
</dbReference>
<dbReference type="InterPro" id="IPR041784">
    <property type="entry name" value="FAK1/PYK2_FERM_C"/>
</dbReference>
<dbReference type="InterPro" id="IPR014352">
    <property type="entry name" value="FERM/acyl-CoA-bd_prot_sf"/>
</dbReference>
<dbReference type="InterPro" id="IPR035963">
    <property type="entry name" value="FERM_2"/>
</dbReference>
<dbReference type="InterPro" id="IPR019748">
    <property type="entry name" value="FERM_central"/>
</dbReference>
<dbReference type="InterPro" id="IPR000299">
    <property type="entry name" value="FERM_domain"/>
</dbReference>
<dbReference type="InterPro" id="IPR036137">
    <property type="entry name" value="Focal_adhe_kin_target_dom_sf"/>
</dbReference>
<dbReference type="InterPro" id="IPR005189">
    <property type="entry name" value="Focal_adhesion_kin_target_dom"/>
</dbReference>
<dbReference type="InterPro" id="IPR011009">
    <property type="entry name" value="Kinase-like_dom_sf"/>
</dbReference>
<dbReference type="InterPro" id="IPR011993">
    <property type="entry name" value="PH-like_dom_sf"/>
</dbReference>
<dbReference type="InterPro" id="IPR000719">
    <property type="entry name" value="Prot_kinase_dom"/>
</dbReference>
<dbReference type="InterPro" id="IPR017441">
    <property type="entry name" value="Protein_kinase_ATP_BS"/>
</dbReference>
<dbReference type="InterPro" id="IPR001245">
    <property type="entry name" value="Ser-Thr/Tyr_kinase_cat_dom"/>
</dbReference>
<dbReference type="InterPro" id="IPR008266">
    <property type="entry name" value="Tyr_kinase_AS"/>
</dbReference>
<dbReference type="InterPro" id="IPR020635">
    <property type="entry name" value="Tyr_kinase_cat_dom"/>
</dbReference>
<dbReference type="InterPro" id="IPR029071">
    <property type="entry name" value="Ubiquitin-like_domsf"/>
</dbReference>
<dbReference type="PANTHER" id="PTHR46221">
    <property type="entry name" value="FERM AND PDZ DOMAIN-CONTAINING PROTEIN FAMILY MEMBER"/>
    <property type="match status" value="1"/>
</dbReference>
<dbReference type="PANTHER" id="PTHR46221:SF12">
    <property type="entry name" value="NON-SPECIFIC PROTEIN-TYROSINE KINASE"/>
    <property type="match status" value="1"/>
</dbReference>
<dbReference type="Pfam" id="PF21477">
    <property type="entry name" value="FERM_C_FAK1"/>
    <property type="match status" value="1"/>
</dbReference>
<dbReference type="Pfam" id="PF00373">
    <property type="entry name" value="FERM_M"/>
    <property type="match status" value="1"/>
</dbReference>
<dbReference type="Pfam" id="PF18038">
    <property type="entry name" value="FERM_N_2"/>
    <property type="match status" value="1"/>
</dbReference>
<dbReference type="Pfam" id="PF03623">
    <property type="entry name" value="Focal_AT"/>
    <property type="match status" value="1"/>
</dbReference>
<dbReference type="Pfam" id="PF07714">
    <property type="entry name" value="PK_Tyr_Ser-Thr"/>
    <property type="match status" value="1"/>
</dbReference>
<dbReference type="PRINTS" id="PR00109">
    <property type="entry name" value="TYRKINASE"/>
</dbReference>
<dbReference type="SMART" id="SM00295">
    <property type="entry name" value="B41"/>
    <property type="match status" value="1"/>
</dbReference>
<dbReference type="SMART" id="SM00219">
    <property type="entry name" value="TyrKc"/>
    <property type="match status" value="1"/>
</dbReference>
<dbReference type="SUPFAM" id="SSF68993">
    <property type="entry name" value="FAT domain of focal adhesion kinase"/>
    <property type="match status" value="1"/>
</dbReference>
<dbReference type="SUPFAM" id="SSF50729">
    <property type="entry name" value="PH domain-like"/>
    <property type="match status" value="1"/>
</dbReference>
<dbReference type="SUPFAM" id="SSF56112">
    <property type="entry name" value="Protein kinase-like (PK-like)"/>
    <property type="match status" value="1"/>
</dbReference>
<dbReference type="SUPFAM" id="SSF47031">
    <property type="entry name" value="Second domain of FERM"/>
    <property type="match status" value="1"/>
</dbReference>
<dbReference type="SUPFAM" id="SSF54236">
    <property type="entry name" value="Ubiquitin-like"/>
    <property type="match status" value="1"/>
</dbReference>
<dbReference type="PROSITE" id="PS00661">
    <property type="entry name" value="FERM_2"/>
    <property type="match status" value="1"/>
</dbReference>
<dbReference type="PROSITE" id="PS50057">
    <property type="entry name" value="FERM_3"/>
    <property type="match status" value="1"/>
</dbReference>
<dbReference type="PROSITE" id="PS00107">
    <property type="entry name" value="PROTEIN_KINASE_ATP"/>
    <property type="match status" value="1"/>
</dbReference>
<dbReference type="PROSITE" id="PS50011">
    <property type="entry name" value="PROTEIN_KINASE_DOM"/>
    <property type="match status" value="1"/>
</dbReference>
<dbReference type="PROSITE" id="PS00109">
    <property type="entry name" value="PROTEIN_KINASE_TYR"/>
    <property type="match status" value="1"/>
</dbReference>
<proteinExistence type="evidence at transcript level"/>
<organism>
    <name type="scientific">Xenopus laevis</name>
    <name type="common">African clawed frog</name>
    <dbReference type="NCBI Taxonomy" id="8355"/>
    <lineage>
        <taxon>Eukaryota</taxon>
        <taxon>Metazoa</taxon>
        <taxon>Chordata</taxon>
        <taxon>Craniata</taxon>
        <taxon>Vertebrata</taxon>
        <taxon>Euteleostomi</taxon>
        <taxon>Amphibia</taxon>
        <taxon>Batrachia</taxon>
        <taxon>Anura</taxon>
        <taxon>Pipoidea</taxon>
        <taxon>Pipidae</taxon>
        <taxon>Xenopodinae</taxon>
        <taxon>Xenopus</taxon>
        <taxon>Xenopus</taxon>
    </lineage>
</organism>
<accession>Q91738</accession>
<accession>Q91563</accession>
<reference key="1">
    <citation type="journal article" date="1995" name="Gene">
        <title>Cloning of a Xenopus laevis cDNA encoding focal adhesion kinase (FAK) and expression during early development.</title>
        <authorList>
            <person name="Zhang X."/>
            <person name="Wright C.V."/>
            <person name="Hanks S.K."/>
        </authorList>
    </citation>
    <scope>NUCLEOTIDE SEQUENCE [MRNA] (ISOFORM SHORT)</scope>
</reference>
<reference key="2">
    <citation type="journal article" date="1995" name="Dev. Biol.">
        <title>Molecular analysis and developmental expression of the focal adhesion kinase pp125FAK in Xenopus laevis.</title>
        <authorList>
            <person name="Hens M.D."/>
            <person name="DeSimone D.W."/>
        </authorList>
    </citation>
    <scope>NUCLEOTIDE SEQUENCE [MRNA] (ISOFORM LONG)</scope>
    <source>
        <tissue>Embryo</tissue>
    </source>
</reference>
<feature type="chain" id="PRO_0000088080" description="Focal adhesion kinase 1">
    <location>
        <begin position="1"/>
        <end position="1068"/>
    </location>
</feature>
<feature type="domain" description="FERM" evidence="3">
    <location>
        <begin position="35"/>
        <end position="355"/>
    </location>
</feature>
<feature type="domain" description="Protein kinase" evidence="4">
    <location>
        <begin position="435"/>
        <end position="693"/>
    </location>
</feature>
<feature type="region of interest" description="Disordered" evidence="6">
    <location>
        <begin position="1"/>
        <end position="26"/>
    </location>
</feature>
<feature type="region of interest" description="Disordered" evidence="6">
    <location>
        <begin position="699"/>
        <end position="750"/>
    </location>
</feature>
<feature type="region of interest" description="Disordered" evidence="6">
    <location>
        <begin position="869"/>
        <end position="912"/>
    </location>
</feature>
<feature type="compositionally biased region" description="Polar residues" evidence="6">
    <location>
        <begin position="10"/>
        <end position="23"/>
    </location>
</feature>
<feature type="compositionally biased region" description="Basic and acidic residues" evidence="6">
    <location>
        <begin position="699"/>
        <end position="710"/>
    </location>
</feature>
<feature type="active site" description="Proton acceptor" evidence="4 5">
    <location>
        <position position="559"/>
    </location>
</feature>
<feature type="binding site" evidence="4">
    <location>
        <begin position="441"/>
        <end position="447"/>
    </location>
    <ligand>
        <name>ATP</name>
        <dbReference type="ChEBI" id="CHEBI:30616"/>
    </ligand>
</feature>
<feature type="binding site" evidence="4">
    <location>
        <position position="467"/>
    </location>
    <ligand>
        <name>ATP</name>
        <dbReference type="ChEBI" id="CHEBI:30616"/>
    </ligand>
</feature>
<feature type="binding site" evidence="4">
    <location>
        <begin position="513"/>
        <end position="515"/>
    </location>
    <ligand>
        <name>ATP</name>
        <dbReference type="ChEBI" id="CHEBI:30616"/>
    </ligand>
</feature>
<feature type="modified residue" description="Phosphotyrosine" evidence="1">
    <location>
        <position position="403"/>
    </location>
</feature>
<feature type="modified residue" description="Phosphotyrosine" evidence="1">
    <location>
        <position position="413"/>
    </location>
</feature>
<feature type="modified residue" description="Phosphotyrosine; by autocatalysis" evidence="1">
    <location>
        <position position="589"/>
    </location>
</feature>
<feature type="modified residue" description="Phosphotyrosine; by autocatalysis" evidence="1">
    <location>
        <position position="590"/>
    </location>
</feature>
<feature type="modified residue" description="Phosphotyrosine" evidence="1">
    <location>
        <position position="874"/>
    </location>
</feature>
<feature type="modified residue" description="Phosphotyrosine" evidence="1">
    <location>
        <position position="941"/>
    </location>
</feature>
<feature type="splice variant" id="VSP_004978" description="In isoform Short." evidence="7">
    <location>
        <begin position="393"/>
        <end position="398"/>
    </location>
</feature>
<feature type="splice variant" id="VSP_004979" description="In isoform Short." evidence="7">
    <original>KSYGLDEA</original>
    <variation>T</variation>
    <location>
        <begin position="418"/>
        <end position="425"/>
    </location>
</feature>
<feature type="splice variant" id="VSP_004980" description="In isoform Short." evidence="7">
    <location>
        <begin position="917"/>
        <end position="919"/>
    </location>
</feature>
<feature type="sequence conflict" description="In Ref. 2; AAA99456." evidence="8" ref="2">
    <original>R</original>
    <variation>P</variation>
    <location>
        <position position="439"/>
    </location>
</feature>
<gene>
    <name type="primary">ptk2</name>
    <name type="synonym">fak1</name>
</gene>
<comment type="function">
    <text evidence="1">Non-receptor protein-tyrosine kinase implicated in signaling pathways involved in cell motility, proliferation and apoptosis. Activated by tyrosine-phosphorylation in response to either integrin clustering induced by cell adhesion or antibody cross-linking, or via G-protein coupled receptor (GPCR) occupancy by ligands such as bombesin or lysophosphatidic acid, or via LDL receptor occupancy. Microtubule-induced dephosphorylation at Tyr-397 is crucial for the induction of focal adhesion disassembly (By similarity).</text>
</comment>
<comment type="catalytic activity">
    <reaction evidence="5">
        <text>L-tyrosyl-[protein] + ATP = O-phospho-L-tyrosyl-[protein] + ADP + H(+)</text>
        <dbReference type="Rhea" id="RHEA:10596"/>
        <dbReference type="Rhea" id="RHEA-COMP:10136"/>
        <dbReference type="Rhea" id="RHEA-COMP:20101"/>
        <dbReference type="ChEBI" id="CHEBI:15378"/>
        <dbReference type="ChEBI" id="CHEBI:30616"/>
        <dbReference type="ChEBI" id="CHEBI:46858"/>
        <dbReference type="ChEBI" id="CHEBI:61978"/>
        <dbReference type="ChEBI" id="CHEBI:456216"/>
        <dbReference type="EC" id="2.7.10.2"/>
    </reaction>
</comment>
<comment type="subcellular location">
    <subcellularLocation>
        <location>Cell junction</location>
        <location>Focal adhesion</location>
    </subcellularLocation>
    <subcellularLocation>
        <location>Cell membrane</location>
        <topology>Peripheral membrane protein</topology>
        <orientation>Cytoplasmic side</orientation>
    </subcellularLocation>
    <subcellularLocation>
        <location evidence="2">Cytoplasm</location>
        <location evidence="2">Cytoskeleton</location>
        <location evidence="2">Cilium basal body</location>
    </subcellularLocation>
    <text>Constituent of focal adhesions.</text>
</comment>
<comment type="alternative products">
    <event type="alternative splicing"/>
    <isoform>
        <id>Q91738-1</id>
        <name>Long</name>
        <sequence type="displayed"/>
    </isoform>
    <isoform>
        <id>Q91738-2</id>
        <name>Short</name>
        <sequence type="described" ref="VSP_004978 VSP_004979 VSP_004980"/>
    </isoform>
</comment>
<comment type="developmental stage">
    <text>Present in the fertilized egg and in cleavage and blastula stage embryos. During gastrulation, expression increases significantly and is detected in mesoderm, marginal zone ectoderm, and cells of the blastocoel roof. Later in development, prominently expressed at intersomitic junctions, in the brain and in several cranial nerves.</text>
</comment>
<comment type="PTM">
    <text>Phosphorylated on tyrosine residues; phosphorylated kinase is first detected during gastrulation, suggesting that tyrosine phosphorylation is developmentally regulated.</text>
</comment>
<comment type="similarity">
    <text evidence="4">Belongs to the protein kinase superfamily. Tyr protein kinase family. FAK subfamily.</text>
</comment>
<protein>
    <recommendedName>
        <fullName>Focal adhesion kinase 1</fullName>
        <shortName>FADK 1</shortName>
        <ecNumber>2.7.10.2</ecNumber>
    </recommendedName>
    <alternativeName>
        <fullName>Protein-tyrosine kinase 2</fullName>
    </alternativeName>
    <alternativeName>
        <fullName>pp125FAK</fullName>
    </alternativeName>
</protein>
<sequence>MAAAYLDPNLNHNPSTNAKSRLSTGMERSPGAIERVLRVFHYFESNNEPATWSSNIRHGDATDVRGIIQKIVDSHKVKNVASYGLRLSHLHSEEVHWLHPDIGVSHIREKYEQSHPPEEWKYELRIRYLPKGFVNQFTEDKPTLNFFYQQVKNDYMSEIADQVDQEIALKLGCLEIRRSYGEMRGNALEKKSNYEVLEKDVGLKRFFPKSLLDSVKAKTLRKLIQQTFRQFANLNREESILKFFEILSPVYRYDKECFKCALGSSWIISVELAIGPEEGISYLTDKGSNPTHLADFTQVQTIQYSSSEDKDRKGMLQLKIAGAPEPLTVTAPSLTIAENMADLIDGYCRLVSGASESFIIRPQKEGERALPSIPKLANNEKHGVRPHAVSVSDEFSGDETDDYAEIIDEEDTYTMPSKSYGLDEAGDYEIQRDRIELGRCIGEGQFGDVHQGVYMSPENPAMAVAIKTCKNCTSDSVREKFLQEALTMRQFDHPHIVKLIGVITENPVWIIMELCTLGELRSFLQVRKYSLDLASLILYSYQLSTALAYLESKRFVHRDIAARNVLVSSSDCVKLGDFGLSRYMEDSTYYKASKGKLPIKWMAPESINFRRFTSASDVWMFGVCMWEILMYGVKPFQGVKNNDVIGRIENGERLPMPPNCPPTLYSLMTKCWAYDPSRRPRFTELKAQLSTILEEEKLQQEERMRMESRRQVTVSWDSGGSDEAPPKPSRPGYPSPRSSEGFFPSPQHMMQPNHYQVSGFSVAHGIPSMSGNMYPGQASVLDHMDSWNHRTPDINMWQPSMEDSGPMDMRSLAQVLPTHLMEERLIRQQQEMEEDQRWLEKEERFLKPDVRLSRGSVDHVDGNIQCPAGNQHIYQPVGKPDHVAPPKKPPRPGAPSHLGNLPAHNSPVDGYNEGVKPWRIQPQEISPPPTANLDRTNDKVYENVTGLVKAVIEMSSRIQPAPPEEYVPMVKGVGLALRTLLATVDETIPVLPASTHREIEMAQKLLNSDLAELINKMKLAQQYVMTSLQQEYKKQMLTAAHALAVDAKNLLDVIDQARLKIISHSRPH</sequence>
<name>FAK1_XENLA</name>
<evidence type="ECO:0000250" key="1"/>
<evidence type="ECO:0000250" key="2">
    <source>
        <dbReference type="UniProtKB" id="Q05397"/>
    </source>
</evidence>
<evidence type="ECO:0000255" key="3">
    <source>
        <dbReference type="PROSITE-ProRule" id="PRU00084"/>
    </source>
</evidence>
<evidence type="ECO:0000255" key="4">
    <source>
        <dbReference type="PROSITE-ProRule" id="PRU00159"/>
    </source>
</evidence>
<evidence type="ECO:0000255" key="5">
    <source>
        <dbReference type="PROSITE-ProRule" id="PRU10028"/>
    </source>
</evidence>
<evidence type="ECO:0000256" key="6">
    <source>
        <dbReference type="SAM" id="MobiDB-lite"/>
    </source>
</evidence>
<evidence type="ECO:0000303" key="7">
    <source>
    </source>
</evidence>
<evidence type="ECO:0000305" key="8"/>
<keyword id="KW-0025">Alternative splicing</keyword>
<keyword id="KW-0067">ATP-binding</keyword>
<keyword id="KW-0965">Cell junction</keyword>
<keyword id="KW-1003">Cell membrane</keyword>
<keyword id="KW-0966">Cell projection</keyword>
<keyword id="KW-0963">Cytoplasm</keyword>
<keyword id="KW-0206">Cytoskeleton</keyword>
<keyword id="KW-0217">Developmental protein</keyword>
<keyword id="KW-0418">Kinase</keyword>
<keyword id="KW-0472">Membrane</keyword>
<keyword id="KW-0547">Nucleotide-binding</keyword>
<keyword id="KW-0597">Phosphoprotein</keyword>
<keyword id="KW-1185">Reference proteome</keyword>
<keyword id="KW-0808">Transferase</keyword>
<keyword id="KW-0829">Tyrosine-protein kinase</keyword>